<accession>B5F696</accession>
<evidence type="ECO:0000255" key="1">
    <source>
        <dbReference type="HAMAP-Rule" id="MF_01603"/>
    </source>
</evidence>
<dbReference type="EC" id="2.7.1.167" evidence="1"/>
<dbReference type="EC" id="2.7.7.70" evidence="1"/>
<dbReference type="EMBL" id="CP001138">
    <property type="protein sequence ID" value="ACH48558.1"/>
    <property type="molecule type" value="Genomic_DNA"/>
</dbReference>
<dbReference type="RefSeq" id="WP_000867682.1">
    <property type="nucleotide sequence ID" value="NC_011149.1"/>
</dbReference>
<dbReference type="SMR" id="B5F696"/>
<dbReference type="KEGG" id="sea:SeAg_B3386"/>
<dbReference type="HOGENOM" id="CLU_021150_2_1_6"/>
<dbReference type="UniPathway" id="UPA00356">
    <property type="reaction ID" value="UER00437"/>
</dbReference>
<dbReference type="UniPathway" id="UPA00356">
    <property type="reaction ID" value="UER00439"/>
</dbReference>
<dbReference type="Proteomes" id="UP000008819">
    <property type="component" value="Chromosome"/>
</dbReference>
<dbReference type="GO" id="GO:0005829">
    <property type="term" value="C:cytosol"/>
    <property type="evidence" value="ECO:0007669"/>
    <property type="project" value="TreeGrafter"/>
</dbReference>
<dbReference type="GO" id="GO:0005524">
    <property type="term" value="F:ATP binding"/>
    <property type="evidence" value="ECO:0007669"/>
    <property type="project" value="UniProtKB-UniRule"/>
</dbReference>
<dbReference type="GO" id="GO:0033785">
    <property type="term" value="F:heptose 7-phosphate kinase activity"/>
    <property type="evidence" value="ECO:0007669"/>
    <property type="project" value="UniProtKB-UniRule"/>
</dbReference>
<dbReference type="GO" id="GO:0033786">
    <property type="term" value="F:heptose-1-phosphate adenylyltransferase activity"/>
    <property type="evidence" value="ECO:0007669"/>
    <property type="project" value="UniProtKB-UniRule"/>
</dbReference>
<dbReference type="GO" id="GO:0016773">
    <property type="term" value="F:phosphotransferase activity, alcohol group as acceptor"/>
    <property type="evidence" value="ECO:0007669"/>
    <property type="project" value="InterPro"/>
</dbReference>
<dbReference type="GO" id="GO:0097171">
    <property type="term" value="P:ADP-L-glycero-beta-D-manno-heptose biosynthetic process"/>
    <property type="evidence" value="ECO:0007669"/>
    <property type="project" value="UniProtKB-UniPathway"/>
</dbReference>
<dbReference type="CDD" id="cd01172">
    <property type="entry name" value="RfaE_like"/>
    <property type="match status" value="1"/>
</dbReference>
<dbReference type="FunFam" id="3.40.1190.20:FF:000002">
    <property type="entry name" value="Bifunctional protein HldE"/>
    <property type="match status" value="1"/>
</dbReference>
<dbReference type="FunFam" id="3.40.50.620:FF:000028">
    <property type="entry name" value="Bifunctional protein HldE"/>
    <property type="match status" value="1"/>
</dbReference>
<dbReference type="Gene3D" id="3.40.1190.20">
    <property type="match status" value="1"/>
</dbReference>
<dbReference type="Gene3D" id="3.40.50.620">
    <property type="entry name" value="HUPs"/>
    <property type="match status" value="1"/>
</dbReference>
<dbReference type="HAMAP" id="MF_01603">
    <property type="entry name" value="HldE"/>
    <property type="match status" value="1"/>
</dbReference>
<dbReference type="InterPro" id="IPR023030">
    <property type="entry name" value="Bifunc_HldE"/>
</dbReference>
<dbReference type="InterPro" id="IPR002173">
    <property type="entry name" value="Carboh/pur_kinase_PfkB_CS"/>
</dbReference>
<dbReference type="InterPro" id="IPR004821">
    <property type="entry name" value="Cyt_trans-like"/>
</dbReference>
<dbReference type="InterPro" id="IPR011611">
    <property type="entry name" value="PfkB_dom"/>
</dbReference>
<dbReference type="InterPro" id="IPR011913">
    <property type="entry name" value="RfaE_dom_I"/>
</dbReference>
<dbReference type="InterPro" id="IPR011914">
    <property type="entry name" value="RfaE_dom_II"/>
</dbReference>
<dbReference type="InterPro" id="IPR029056">
    <property type="entry name" value="Ribokinase-like"/>
</dbReference>
<dbReference type="InterPro" id="IPR014729">
    <property type="entry name" value="Rossmann-like_a/b/a_fold"/>
</dbReference>
<dbReference type="NCBIfam" id="TIGR00125">
    <property type="entry name" value="cyt_tran_rel"/>
    <property type="match status" value="1"/>
</dbReference>
<dbReference type="NCBIfam" id="NF008454">
    <property type="entry name" value="PRK11316.1"/>
    <property type="match status" value="1"/>
</dbReference>
<dbReference type="NCBIfam" id="TIGR02198">
    <property type="entry name" value="rfaE_dom_I"/>
    <property type="match status" value="1"/>
</dbReference>
<dbReference type="NCBIfam" id="TIGR02199">
    <property type="entry name" value="rfaE_dom_II"/>
    <property type="match status" value="1"/>
</dbReference>
<dbReference type="PANTHER" id="PTHR46969">
    <property type="entry name" value="BIFUNCTIONAL PROTEIN HLDE"/>
    <property type="match status" value="1"/>
</dbReference>
<dbReference type="PANTHER" id="PTHR46969:SF1">
    <property type="entry name" value="BIFUNCTIONAL PROTEIN HLDE"/>
    <property type="match status" value="1"/>
</dbReference>
<dbReference type="Pfam" id="PF01467">
    <property type="entry name" value="CTP_transf_like"/>
    <property type="match status" value="1"/>
</dbReference>
<dbReference type="Pfam" id="PF00294">
    <property type="entry name" value="PfkB"/>
    <property type="match status" value="1"/>
</dbReference>
<dbReference type="SUPFAM" id="SSF52374">
    <property type="entry name" value="Nucleotidylyl transferase"/>
    <property type="match status" value="1"/>
</dbReference>
<dbReference type="SUPFAM" id="SSF53613">
    <property type="entry name" value="Ribokinase-like"/>
    <property type="match status" value="1"/>
</dbReference>
<dbReference type="PROSITE" id="PS00583">
    <property type="entry name" value="PFKB_KINASES_1"/>
    <property type="match status" value="1"/>
</dbReference>
<keyword id="KW-0067">ATP-binding</keyword>
<keyword id="KW-0119">Carbohydrate metabolism</keyword>
<keyword id="KW-0418">Kinase</keyword>
<keyword id="KW-0511">Multifunctional enzyme</keyword>
<keyword id="KW-0547">Nucleotide-binding</keyword>
<keyword id="KW-0548">Nucleotidyltransferase</keyword>
<keyword id="KW-0808">Transferase</keyword>
<name>HLDE_SALA4</name>
<protein>
    <recommendedName>
        <fullName evidence="1">Bifunctional protein HldE</fullName>
    </recommendedName>
    <domain>
        <recommendedName>
            <fullName evidence="1">D-beta-D-heptose 7-phosphate kinase</fullName>
            <ecNumber evidence="1">2.7.1.167</ecNumber>
        </recommendedName>
        <alternativeName>
            <fullName evidence="1">D-beta-D-heptose 7-phosphotransferase</fullName>
        </alternativeName>
        <alternativeName>
            <fullName evidence="1">D-glycero-beta-D-manno-heptose-7-phosphate kinase</fullName>
        </alternativeName>
    </domain>
    <domain>
        <recommendedName>
            <fullName evidence="1">D-beta-D-heptose 1-phosphate adenylyltransferase</fullName>
            <ecNumber evidence="1">2.7.7.70</ecNumber>
        </recommendedName>
        <alternativeName>
            <fullName evidence="1">D-glycero-beta-D-manno-heptose 1-phosphate adenylyltransferase</fullName>
        </alternativeName>
    </domain>
</protein>
<gene>
    <name evidence="1" type="primary">hldE</name>
    <name type="ordered locus">SeAg_B3386</name>
</gene>
<sequence length="477" mass="51124">MKVNLPAFERAGVMVVGDVMLDRYWYGPTCRISPEAPVPVVKVNTVEERPGGAANVAMNIASLGANARLVGLTGIDDAARALSKTLAEVNVKCDFVSVPTHPTITKLRVLSRNQQLIRLDFEEGFEGVDPQPLHERINQALGSIGALVLSDYAKGALTSVQTMISLARQAGVPVLIDPKGTDFERYRGATLLTPNLSEFEAVAGKCKSEDELVERGMKLIADYDLSALLVTRSEQGMTLLQPNKAPLHMPTQAQEVYDVTGAGDTVIGVLAATLAAGNTLEEACYFANAAAGVVVGKLGTSTVSPIELENAVRGRADTGFGVMTEEELRQAVASARKRGEKVVMTNGVFDILHAGHVSYLANARKLGDRLIVAVNSDASTKRLKGESRPVNPLEQRMIVLGALESVDWVVSFEEDTPQRLIAGILPDLLVKGGDYKPEEIAGSEEVWANGGEVMVLNFEDGCSTTNIIKKIQTESEK</sequence>
<comment type="function">
    <text evidence="1">Catalyzes the phosphorylation of D-glycero-D-manno-heptose 7-phosphate at the C-1 position to selectively form D-glycero-beta-D-manno-heptose-1,7-bisphosphate.</text>
</comment>
<comment type="function">
    <text evidence="1">Catalyzes the ADP transfer from ATP to D-glycero-beta-D-manno-heptose 1-phosphate, yielding ADP-D-glycero-beta-D-manno-heptose.</text>
</comment>
<comment type="catalytic activity">
    <reaction evidence="1">
        <text>D-glycero-beta-D-manno-heptose 7-phosphate + ATP = D-glycero-beta-D-manno-heptose 1,7-bisphosphate + ADP + H(+)</text>
        <dbReference type="Rhea" id="RHEA:27473"/>
        <dbReference type="ChEBI" id="CHEBI:15378"/>
        <dbReference type="ChEBI" id="CHEBI:30616"/>
        <dbReference type="ChEBI" id="CHEBI:60204"/>
        <dbReference type="ChEBI" id="CHEBI:60208"/>
        <dbReference type="ChEBI" id="CHEBI:456216"/>
        <dbReference type="EC" id="2.7.1.167"/>
    </reaction>
</comment>
<comment type="catalytic activity">
    <reaction evidence="1">
        <text>D-glycero-beta-D-manno-heptose 1-phosphate + ATP + H(+) = ADP-D-glycero-beta-D-manno-heptose + diphosphate</text>
        <dbReference type="Rhea" id="RHEA:27465"/>
        <dbReference type="ChEBI" id="CHEBI:15378"/>
        <dbReference type="ChEBI" id="CHEBI:30616"/>
        <dbReference type="ChEBI" id="CHEBI:33019"/>
        <dbReference type="ChEBI" id="CHEBI:59967"/>
        <dbReference type="ChEBI" id="CHEBI:61593"/>
        <dbReference type="EC" id="2.7.7.70"/>
    </reaction>
</comment>
<comment type="pathway">
    <text evidence="1">Nucleotide-sugar biosynthesis; ADP-L-glycero-beta-D-manno-heptose biosynthesis; ADP-L-glycero-beta-D-manno-heptose from D-glycero-beta-D-manno-heptose 7-phosphate: step 1/4.</text>
</comment>
<comment type="pathway">
    <text evidence="1">Nucleotide-sugar biosynthesis; ADP-L-glycero-beta-D-manno-heptose biosynthesis; ADP-L-glycero-beta-D-manno-heptose from D-glycero-beta-D-manno-heptose 7-phosphate: step 3/4.</text>
</comment>
<comment type="subunit">
    <text evidence="1">Homodimer.</text>
</comment>
<comment type="similarity">
    <text evidence="1">In the N-terminal section; belongs to the carbohydrate kinase PfkB family.</text>
</comment>
<comment type="similarity">
    <text evidence="1">In the C-terminal section; belongs to the cytidylyltransferase family.</text>
</comment>
<proteinExistence type="inferred from homology"/>
<feature type="chain" id="PRO_1000185813" description="Bifunctional protein HldE">
    <location>
        <begin position="1"/>
        <end position="477"/>
    </location>
</feature>
<feature type="region of interest" description="Ribokinase">
    <location>
        <begin position="1"/>
        <end position="318"/>
    </location>
</feature>
<feature type="region of interest" description="Cytidylyltransferase">
    <location>
        <begin position="344"/>
        <end position="477"/>
    </location>
</feature>
<feature type="active site" evidence="1">
    <location>
        <position position="264"/>
    </location>
</feature>
<feature type="binding site" evidence="1">
    <location>
        <begin position="195"/>
        <end position="198"/>
    </location>
    <ligand>
        <name>ATP</name>
        <dbReference type="ChEBI" id="CHEBI:30616"/>
    </ligand>
</feature>
<organism>
    <name type="scientific">Salmonella agona (strain SL483)</name>
    <dbReference type="NCBI Taxonomy" id="454166"/>
    <lineage>
        <taxon>Bacteria</taxon>
        <taxon>Pseudomonadati</taxon>
        <taxon>Pseudomonadota</taxon>
        <taxon>Gammaproteobacteria</taxon>
        <taxon>Enterobacterales</taxon>
        <taxon>Enterobacteriaceae</taxon>
        <taxon>Salmonella</taxon>
    </lineage>
</organism>
<reference key="1">
    <citation type="journal article" date="2011" name="J. Bacteriol.">
        <title>Comparative genomics of 28 Salmonella enterica isolates: evidence for CRISPR-mediated adaptive sublineage evolution.</title>
        <authorList>
            <person name="Fricke W.F."/>
            <person name="Mammel M.K."/>
            <person name="McDermott P.F."/>
            <person name="Tartera C."/>
            <person name="White D.G."/>
            <person name="Leclerc J.E."/>
            <person name="Ravel J."/>
            <person name="Cebula T.A."/>
        </authorList>
    </citation>
    <scope>NUCLEOTIDE SEQUENCE [LARGE SCALE GENOMIC DNA]</scope>
    <source>
        <strain>SL483</strain>
    </source>
</reference>